<proteinExistence type="inferred from homology"/>
<comment type="catalytic activity">
    <reaction evidence="1">
        <text>tRNA(Phe) + L-phenylalanine + ATP = L-phenylalanyl-tRNA(Phe) + AMP + diphosphate + H(+)</text>
        <dbReference type="Rhea" id="RHEA:19413"/>
        <dbReference type="Rhea" id="RHEA-COMP:9668"/>
        <dbReference type="Rhea" id="RHEA-COMP:9699"/>
        <dbReference type="ChEBI" id="CHEBI:15378"/>
        <dbReference type="ChEBI" id="CHEBI:30616"/>
        <dbReference type="ChEBI" id="CHEBI:33019"/>
        <dbReference type="ChEBI" id="CHEBI:58095"/>
        <dbReference type="ChEBI" id="CHEBI:78442"/>
        <dbReference type="ChEBI" id="CHEBI:78531"/>
        <dbReference type="ChEBI" id="CHEBI:456215"/>
        <dbReference type="EC" id="6.1.1.20"/>
    </reaction>
</comment>
<comment type="cofactor">
    <cofactor evidence="1">
        <name>Mg(2+)</name>
        <dbReference type="ChEBI" id="CHEBI:18420"/>
    </cofactor>
    <text evidence="1">Binds 2 magnesium ions per tetramer.</text>
</comment>
<comment type="subunit">
    <text evidence="1">Tetramer of two alpha and two beta subunits.</text>
</comment>
<comment type="subcellular location">
    <subcellularLocation>
        <location evidence="1">Cytoplasm</location>
    </subcellularLocation>
</comment>
<comment type="similarity">
    <text evidence="1">Belongs to the class-II aminoacyl-tRNA synthetase family. Phe-tRNA synthetase alpha subunit type 1 subfamily.</text>
</comment>
<evidence type="ECO:0000255" key="1">
    <source>
        <dbReference type="HAMAP-Rule" id="MF_00281"/>
    </source>
</evidence>
<gene>
    <name evidence="1" type="primary">pheS</name>
    <name type="ordered locus">PMI1038</name>
</gene>
<reference key="1">
    <citation type="journal article" date="2008" name="J. Bacteriol.">
        <title>Complete genome sequence of uropathogenic Proteus mirabilis, a master of both adherence and motility.</title>
        <authorList>
            <person name="Pearson M.M."/>
            <person name="Sebaihia M."/>
            <person name="Churcher C."/>
            <person name="Quail M.A."/>
            <person name="Seshasayee A.S."/>
            <person name="Luscombe N.M."/>
            <person name="Abdellah Z."/>
            <person name="Arrosmith C."/>
            <person name="Atkin B."/>
            <person name="Chillingworth T."/>
            <person name="Hauser H."/>
            <person name="Jagels K."/>
            <person name="Moule S."/>
            <person name="Mungall K."/>
            <person name="Norbertczak H."/>
            <person name="Rabbinowitsch E."/>
            <person name="Walker D."/>
            <person name="Whithead S."/>
            <person name="Thomson N.R."/>
            <person name="Rather P.N."/>
            <person name="Parkhill J."/>
            <person name="Mobley H.L.T."/>
        </authorList>
    </citation>
    <scope>NUCLEOTIDE SEQUENCE [LARGE SCALE GENOMIC DNA]</scope>
    <source>
        <strain>HI4320</strain>
    </source>
</reference>
<organism>
    <name type="scientific">Proteus mirabilis (strain HI4320)</name>
    <dbReference type="NCBI Taxonomy" id="529507"/>
    <lineage>
        <taxon>Bacteria</taxon>
        <taxon>Pseudomonadati</taxon>
        <taxon>Pseudomonadota</taxon>
        <taxon>Gammaproteobacteria</taxon>
        <taxon>Enterobacterales</taxon>
        <taxon>Morganellaceae</taxon>
        <taxon>Proteus</taxon>
    </lineage>
</organism>
<accession>B4ETL0</accession>
<sequence length="327" mass="37186">MPHLAELVAQAKAAIEEAQDVAALDSVRVEYLGKKGHLTLQMSTLRDLPAEERPAAGAVINQAKQEVQQALNARKEQMESALLNERLAAEKIDVSLPGRRIENGGLHPVTRTIERIETFFGELGFSVESGPEIEDDYHNFDALNIPAHHPARADHDTFWFDAKRLLRTQTSGVQIRTMQNKQPPIRIIAPGRVYRNDYDQTHTPMFHQVEGLIVDKDISFTNLKGTLHDFLKNFFEEDMEIRFRPSYFPFTEPSAEVDVMGKNGKWLEVLGCGMVHPNVLRNVGIDPEVYSGFAFGMGMERLTMLRYGVTDLRSFFENDLRFLKQFK</sequence>
<protein>
    <recommendedName>
        <fullName evidence="1">Phenylalanine--tRNA ligase alpha subunit</fullName>
        <ecNumber evidence="1">6.1.1.20</ecNumber>
    </recommendedName>
    <alternativeName>
        <fullName evidence="1">Phenylalanyl-tRNA synthetase alpha subunit</fullName>
        <shortName evidence="1">PheRS</shortName>
    </alternativeName>
</protein>
<dbReference type="EC" id="6.1.1.20" evidence="1"/>
<dbReference type="EMBL" id="AM942759">
    <property type="protein sequence ID" value="CAR42262.1"/>
    <property type="molecule type" value="Genomic_DNA"/>
</dbReference>
<dbReference type="RefSeq" id="WP_004242610.1">
    <property type="nucleotide sequence ID" value="NC_010554.1"/>
</dbReference>
<dbReference type="SMR" id="B4ETL0"/>
<dbReference type="EnsemblBacteria" id="CAR42262">
    <property type="protein sequence ID" value="CAR42262"/>
    <property type="gene ID" value="PMI1038"/>
</dbReference>
<dbReference type="GeneID" id="6800515"/>
<dbReference type="KEGG" id="pmr:PMI1038"/>
<dbReference type="eggNOG" id="COG0016">
    <property type="taxonomic scope" value="Bacteria"/>
</dbReference>
<dbReference type="HOGENOM" id="CLU_025086_0_1_6"/>
<dbReference type="Proteomes" id="UP000008319">
    <property type="component" value="Chromosome"/>
</dbReference>
<dbReference type="GO" id="GO:0005737">
    <property type="term" value="C:cytoplasm"/>
    <property type="evidence" value="ECO:0007669"/>
    <property type="project" value="UniProtKB-SubCell"/>
</dbReference>
<dbReference type="GO" id="GO:0005524">
    <property type="term" value="F:ATP binding"/>
    <property type="evidence" value="ECO:0007669"/>
    <property type="project" value="UniProtKB-UniRule"/>
</dbReference>
<dbReference type="GO" id="GO:0000287">
    <property type="term" value="F:magnesium ion binding"/>
    <property type="evidence" value="ECO:0007669"/>
    <property type="project" value="UniProtKB-UniRule"/>
</dbReference>
<dbReference type="GO" id="GO:0004826">
    <property type="term" value="F:phenylalanine-tRNA ligase activity"/>
    <property type="evidence" value="ECO:0007669"/>
    <property type="project" value="UniProtKB-UniRule"/>
</dbReference>
<dbReference type="GO" id="GO:0000049">
    <property type="term" value="F:tRNA binding"/>
    <property type="evidence" value="ECO:0007669"/>
    <property type="project" value="InterPro"/>
</dbReference>
<dbReference type="GO" id="GO:0006432">
    <property type="term" value="P:phenylalanyl-tRNA aminoacylation"/>
    <property type="evidence" value="ECO:0007669"/>
    <property type="project" value="UniProtKB-UniRule"/>
</dbReference>
<dbReference type="CDD" id="cd00496">
    <property type="entry name" value="PheRS_alpha_core"/>
    <property type="match status" value="1"/>
</dbReference>
<dbReference type="FunFam" id="3.30.930.10:FF:000003">
    <property type="entry name" value="Phenylalanine--tRNA ligase alpha subunit"/>
    <property type="match status" value="1"/>
</dbReference>
<dbReference type="Gene3D" id="3.30.930.10">
    <property type="entry name" value="Bira Bifunctional Protein, Domain 2"/>
    <property type="match status" value="1"/>
</dbReference>
<dbReference type="HAMAP" id="MF_00281">
    <property type="entry name" value="Phe_tRNA_synth_alpha1"/>
    <property type="match status" value="1"/>
</dbReference>
<dbReference type="InterPro" id="IPR006195">
    <property type="entry name" value="aa-tRNA-synth_II"/>
</dbReference>
<dbReference type="InterPro" id="IPR045864">
    <property type="entry name" value="aa-tRNA-synth_II/BPL/LPL"/>
</dbReference>
<dbReference type="InterPro" id="IPR004529">
    <property type="entry name" value="Phe-tRNA-synth_IIc_asu"/>
</dbReference>
<dbReference type="InterPro" id="IPR004188">
    <property type="entry name" value="Phe-tRNA_ligase_II_N"/>
</dbReference>
<dbReference type="InterPro" id="IPR022911">
    <property type="entry name" value="Phe_tRNA_ligase_alpha1_bac"/>
</dbReference>
<dbReference type="InterPro" id="IPR002319">
    <property type="entry name" value="Phenylalanyl-tRNA_Synthase"/>
</dbReference>
<dbReference type="InterPro" id="IPR010978">
    <property type="entry name" value="tRNA-bd_arm"/>
</dbReference>
<dbReference type="NCBIfam" id="TIGR00468">
    <property type="entry name" value="pheS"/>
    <property type="match status" value="1"/>
</dbReference>
<dbReference type="PANTHER" id="PTHR11538:SF41">
    <property type="entry name" value="PHENYLALANINE--TRNA LIGASE, MITOCHONDRIAL"/>
    <property type="match status" value="1"/>
</dbReference>
<dbReference type="PANTHER" id="PTHR11538">
    <property type="entry name" value="PHENYLALANYL-TRNA SYNTHETASE"/>
    <property type="match status" value="1"/>
</dbReference>
<dbReference type="Pfam" id="PF02912">
    <property type="entry name" value="Phe_tRNA-synt_N"/>
    <property type="match status" value="1"/>
</dbReference>
<dbReference type="Pfam" id="PF01409">
    <property type="entry name" value="tRNA-synt_2d"/>
    <property type="match status" value="1"/>
</dbReference>
<dbReference type="SUPFAM" id="SSF55681">
    <property type="entry name" value="Class II aaRS and biotin synthetases"/>
    <property type="match status" value="1"/>
</dbReference>
<dbReference type="SUPFAM" id="SSF46589">
    <property type="entry name" value="tRNA-binding arm"/>
    <property type="match status" value="1"/>
</dbReference>
<dbReference type="PROSITE" id="PS50862">
    <property type="entry name" value="AA_TRNA_LIGASE_II"/>
    <property type="match status" value="1"/>
</dbReference>
<feature type="chain" id="PRO_1000114901" description="Phenylalanine--tRNA ligase alpha subunit">
    <location>
        <begin position="1"/>
        <end position="327"/>
    </location>
</feature>
<feature type="binding site" evidence="1">
    <location>
        <position position="252"/>
    </location>
    <ligand>
        <name>Mg(2+)</name>
        <dbReference type="ChEBI" id="CHEBI:18420"/>
        <note>shared with beta subunit</note>
    </ligand>
</feature>
<keyword id="KW-0030">Aminoacyl-tRNA synthetase</keyword>
<keyword id="KW-0067">ATP-binding</keyword>
<keyword id="KW-0963">Cytoplasm</keyword>
<keyword id="KW-0436">Ligase</keyword>
<keyword id="KW-0460">Magnesium</keyword>
<keyword id="KW-0479">Metal-binding</keyword>
<keyword id="KW-0547">Nucleotide-binding</keyword>
<keyword id="KW-0648">Protein biosynthesis</keyword>
<keyword id="KW-1185">Reference proteome</keyword>
<name>SYFA_PROMH</name>